<gene>
    <name evidence="1" type="primary">pheS</name>
    <name type="ordered locus">SPC_2394</name>
</gene>
<protein>
    <recommendedName>
        <fullName evidence="1">Phenylalanine--tRNA ligase alpha subunit</fullName>
        <ecNumber evidence="1">6.1.1.20</ecNumber>
    </recommendedName>
    <alternativeName>
        <fullName evidence="1">Phenylalanyl-tRNA synthetase alpha subunit</fullName>
        <shortName evidence="1">PheRS</shortName>
    </alternativeName>
</protein>
<comment type="catalytic activity">
    <reaction evidence="1">
        <text>tRNA(Phe) + L-phenylalanine + ATP = L-phenylalanyl-tRNA(Phe) + AMP + diphosphate + H(+)</text>
        <dbReference type="Rhea" id="RHEA:19413"/>
        <dbReference type="Rhea" id="RHEA-COMP:9668"/>
        <dbReference type="Rhea" id="RHEA-COMP:9699"/>
        <dbReference type="ChEBI" id="CHEBI:15378"/>
        <dbReference type="ChEBI" id="CHEBI:30616"/>
        <dbReference type="ChEBI" id="CHEBI:33019"/>
        <dbReference type="ChEBI" id="CHEBI:58095"/>
        <dbReference type="ChEBI" id="CHEBI:78442"/>
        <dbReference type="ChEBI" id="CHEBI:78531"/>
        <dbReference type="ChEBI" id="CHEBI:456215"/>
        <dbReference type="EC" id="6.1.1.20"/>
    </reaction>
</comment>
<comment type="cofactor">
    <cofactor evidence="1">
        <name>Mg(2+)</name>
        <dbReference type="ChEBI" id="CHEBI:18420"/>
    </cofactor>
    <text evidence="1">Binds 2 magnesium ions per tetramer.</text>
</comment>
<comment type="subunit">
    <text evidence="1">Tetramer of two alpha and two beta subunits.</text>
</comment>
<comment type="subcellular location">
    <subcellularLocation>
        <location evidence="1">Cytoplasm</location>
    </subcellularLocation>
</comment>
<comment type="similarity">
    <text evidence="1">Belongs to the class-II aminoacyl-tRNA synthetase family. Phe-tRNA synthetase alpha subunit type 1 subfamily.</text>
</comment>
<dbReference type="EC" id="6.1.1.20" evidence="1"/>
<dbReference type="EMBL" id="CP000857">
    <property type="protein sequence ID" value="ACN46508.1"/>
    <property type="molecule type" value="Genomic_DNA"/>
</dbReference>
<dbReference type="RefSeq" id="WP_000018570.1">
    <property type="nucleotide sequence ID" value="NC_012125.1"/>
</dbReference>
<dbReference type="SMR" id="C0Q642"/>
<dbReference type="KEGG" id="sei:SPC_2394"/>
<dbReference type="HOGENOM" id="CLU_025086_0_1_6"/>
<dbReference type="Proteomes" id="UP000001599">
    <property type="component" value="Chromosome"/>
</dbReference>
<dbReference type="GO" id="GO:0005737">
    <property type="term" value="C:cytoplasm"/>
    <property type="evidence" value="ECO:0007669"/>
    <property type="project" value="UniProtKB-SubCell"/>
</dbReference>
<dbReference type="GO" id="GO:0005524">
    <property type="term" value="F:ATP binding"/>
    <property type="evidence" value="ECO:0007669"/>
    <property type="project" value="UniProtKB-UniRule"/>
</dbReference>
<dbReference type="GO" id="GO:0000287">
    <property type="term" value="F:magnesium ion binding"/>
    <property type="evidence" value="ECO:0007669"/>
    <property type="project" value="UniProtKB-UniRule"/>
</dbReference>
<dbReference type="GO" id="GO:0004826">
    <property type="term" value="F:phenylalanine-tRNA ligase activity"/>
    <property type="evidence" value="ECO:0007669"/>
    <property type="project" value="UniProtKB-UniRule"/>
</dbReference>
<dbReference type="GO" id="GO:0000049">
    <property type="term" value="F:tRNA binding"/>
    <property type="evidence" value="ECO:0007669"/>
    <property type="project" value="InterPro"/>
</dbReference>
<dbReference type="GO" id="GO:0006432">
    <property type="term" value="P:phenylalanyl-tRNA aminoacylation"/>
    <property type="evidence" value="ECO:0007669"/>
    <property type="project" value="UniProtKB-UniRule"/>
</dbReference>
<dbReference type="CDD" id="cd00496">
    <property type="entry name" value="PheRS_alpha_core"/>
    <property type="match status" value="1"/>
</dbReference>
<dbReference type="FunFam" id="3.30.930.10:FF:000003">
    <property type="entry name" value="Phenylalanine--tRNA ligase alpha subunit"/>
    <property type="match status" value="1"/>
</dbReference>
<dbReference type="Gene3D" id="3.30.930.10">
    <property type="entry name" value="Bira Bifunctional Protein, Domain 2"/>
    <property type="match status" value="1"/>
</dbReference>
<dbReference type="HAMAP" id="MF_00281">
    <property type="entry name" value="Phe_tRNA_synth_alpha1"/>
    <property type="match status" value="1"/>
</dbReference>
<dbReference type="InterPro" id="IPR006195">
    <property type="entry name" value="aa-tRNA-synth_II"/>
</dbReference>
<dbReference type="InterPro" id="IPR045864">
    <property type="entry name" value="aa-tRNA-synth_II/BPL/LPL"/>
</dbReference>
<dbReference type="InterPro" id="IPR004529">
    <property type="entry name" value="Phe-tRNA-synth_IIc_asu"/>
</dbReference>
<dbReference type="InterPro" id="IPR004188">
    <property type="entry name" value="Phe-tRNA_ligase_II_N"/>
</dbReference>
<dbReference type="InterPro" id="IPR022911">
    <property type="entry name" value="Phe_tRNA_ligase_alpha1_bac"/>
</dbReference>
<dbReference type="InterPro" id="IPR002319">
    <property type="entry name" value="Phenylalanyl-tRNA_Synthase"/>
</dbReference>
<dbReference type="InterPro" id="IPR010978">
    <property type="entry name" value="tRNA-bd_arm"/>
</dbReference>
<dbReference type="NCBIfam" id="TIGR00468">
    <property type="entry name" value="pheS"/>
    <property type="match status" value="1"/>
</dbReference>
<dbReference type="PANTHER" id="PTHR11538:SF41">
    <property type="entry name" value="PHENYLALANINE--TRNA LIGASE, MITOCHONDRIAL"/>
    <property type="match status" value="1"/>
</dbReference>
<dbReference type="PANTHER" id="PTHR11538">
    <property type="entry name" value="PHENYLALANYL-TRNA SYNTHETASE"/>
    <property type="match status" value="1"/>
</dbReference>
<dbReference type="Pfam" id="PF02912">
    <property type="entry name" value="Phe_tRNA-synt_N"/>
    <property type="match status" value="1"/>
</dbReference>
<dbReference type="Pfam" id="PF01409">
    <property type="entry name" value="tRNA-synt_2d"/>
    <property type="match status" value="1"/>
</dbReference>
<dbReference type="SUPFAM" id="SSF55681">
    <property type="entry name" value="Class II aaRS and biotin synthetases"/>
    <property type="match status" value="1"/>
</dbReference>
<dbReference type="SUPFAM" id="SSF46589">
    <property type="entry name" value="tRNA-binding arm"/>
    <property type="match status" value="1"/>
</dbReference>
<dbReference type="PROSITE" id="PS50862">
    <property type="entry name" value="AA_TRNA_LIGASE_II"/>
    <property type="match status" value="1"/>
</dbReference>
<organism>
    <name type="scientific">Salmonella paratyphi C (strain RKS4594)</name>
    <dbReference type="NCBI Taxonomy" id="476213"/>
    <lineage>
        <taxon>Bacteria</taxon>
        <taxon>Pseudomonadati</taxon>
        <taxon>Pseudomonadota</taxon>
        <taxon>Gammaproteobacteria</taxon>
        <taxon>Enterobacterales</taxon>
        <taxon>Enterobacteriaceae</taxon>
        <taxon>Salmonella</taxon>
    </lineage>
</organism>
<reference key="1">
    <citation type="journal article" date="2009" name="PLoS ONE">
        <title>Salmonella paratyphi C: genetic divergence from Salmonella choleraesuis and pathogenic convergence with Salmonella typhi.</title>
        <authorList>
            <person name="Liu W.-Q."/>
            <person name="Feng Y."/>
            <person name="Wang Y."/>
            <person name="Zou Q.-H."/>
            <person name="Chen F."/>
            <person name="Guo J.-T."/>
            <person name="Peng Y.-H."/>
            <person name="Jin Y."/>
            <person name="Li Y.-G."/>
            <person name="Hu S.-N."/>
            <person name="Johnston R.N."/>
            <person name="Liu G.-R."/>
            <person name="Liu S.-L."/>
        </authorList>
    </citation>
    <scope>NUCLEOTIDE SEQUENCE [LARGE SCALE GENOMIC DNA]</scope>
    <source>
        <strain>RKS4594</strain>
    </source>
</reference>
<evidence type="ECO:0000255" key="1">
    <source>
        <dbReference type="HAMAP-Rule" id="MF_00281"/>
    </source>
</evidence>
<feature type="chain" id="PRO_1000199323" description="Phenylalanine--tRNA ligase alpha subunit">
    <location>
        <begin position="1"/>
        <end position="327"/>
    </location>
</feature>
<feature type="binding site" evidence="1">
    <location>
        <position position="252"/>
    </location>
    <ligand>
        <name>Mg(2+)</name>
        <dbReference type="ChEBI" id="CHEBI:18420"/>
        <note>shared with beta subunit</note>
    </ligand>
</feature>
<proteinExistence type="inferred from homology"/>
<keyword id="KW-0030">Aminoacyl-tRNA synthetase</keyword>
<keyword id="KW-0067">ATP-binding</keyword>
<keyword id="KW-0963">Cytoplasm</keyword>
<keyword id="KW-0436">Ligase</keyword>
<keyword id="KW-0460">Magnesium</keyword>
<keyword id="KW-0479">Metal-binding</keyword>
<keyword id="KW-0547">Nucleotide-binding</keyword>
<keyword id="KW-0648">Protein biosynthesis</keyword>
<name>SYFA_SALPC</name>
<sequence length="327" mass="36755">MSHLAELVANAAAAINQASDVAALDNVRVEYLGKKGHLTLQMTTLRDLPPEERPAAGAVINAAKEQVQQALNARKAELESAALNARLAAETIDISLPGRRIENGGLHPVTRTIDRIESFFGELGFTVATGPEIEDDYHNFDALNIPGHHPARADHDTFWFDATRLLRTQTSGVQIRTMKAQQPPIRIIAPGRVYRNDYDQTHTPMFHQMEGLIVDTNISFTNLKGTLHDFLRNFFEEDLQIRFRPSYFPFTEPSAEVDVMGKNGKWLEVLGCGMVHPNVLRNVGIDPEIYSGFAFGMGMERLTMLRYGVTDLRSFFENDLRFLKQFK</sequence>
<accession>C0Q642</accession>